<gene>
    <name evidence="1" type="primary">pcn</name>
    <name type="ordered locus">MmarC6_0960</name>
</gene>
<protein>
    <recommendedName>
        <fullName evidence="1">DNA polymerase sliding clamp</fullName>
    </recommendedName>
    <alternativeName>
        <fullName evidence="1">Proliferating cell nuclear antigen homolog</fullName>
        <shortName evidence="1">PCNA</shortName>
    </alternativeName>
</protein>
<reference key="1">
    <citation type="submission" date="2007-10" db="EMBL/GenBank/DDBJ databases">
        <title>Complete sequence of Methanococcus maripaludis C6.</title>
        <authorList>
            <consortium name="US DOE Joint Genome Institute"/>
            <person name="Copeland A."/>
            <person name="Lucas S."/>
            <person name="Lapidus A."/>
            <person name="Barry K."/>
            <person name="Glavina del Rio T."/>
            <person name="Dalin E."/>
            <person name="Tice H."/>
            <person name="Pitluck S."/>
            <person name="Clum A."/>
            <person name="Schmutz J."/>
            <person name="Larimer F."/>
            <person name="Land M."/>
            <person name="Hauser L."/>
            <person name="Kyrpides N."/>
            <person name="Mikhailova N."/>
            <person name="Sieprawska-Lupa M."/>
            <person name="Whitman W.B."/>
            <person name="Richardson P."/>
        </authorList>
    </citation>
    <scope>NUCLEOTIDE SEQUENCE [LARGE SCALE GENOMIC DNA]</scope>
    <source>
        <strain>C6 / ATCC BAA-1332</strain>
    </source>
</reference>
<feature type="chain" id="PRO_1000115815" description="DNA polymerase sliding clamp">
    <location>
        <begin position="1"/>
        <end position="250"/>
    </location>
</feature>
<name>PCNA_METM6</name>
<organism>
    <name type="scientific">Methanococcus maripaludis (strain C6 / ATCC BAA-1332)</name>
    <dbReference type="NCBI Taxonomy" id="444158"/>
    <lineage>
        <taxon>Archaea</taxon>
        <taxon>Methanobacteriati</taxon>
        <taxon>Methanobacteriota</taxon>
        <taxon>Methanomada group</taxon>
        <taxon>Methanococci</taxon>
        <taxon>Methanococcales</taxon>
        <taxon>Methanococcaceae</taxon>
        <taxon>Methanococcus</taxon>
    </lineage>
</organism>
<keyword id="KW-0235">DNA replication</keyword>
<keyword id="KW-0238">DNA-binding</keyword>
<dbReference type="EMBL" id="CP000867">
    <property type="protein sequence ID" value="ABX01775.1"/>
    <property type="molecule type" value="Genomic_DNA"/>
</dbReference>
<dbReference type="SMR" id="A9A8V2"/>
<dbReference type="STRING" id="444158.MmarC6_0960"/>
<dbReference type="KEGG" id="mmx:MmarC6_0960"/>
<dbReference type="eggNOG" id="arCOG00488">
    <property type="taxonomic scope" value="Archaea"/>
</dbReference>
<dbReference type="HOGENOM" id="CLU_043978_1_0_2"/>
<dbReference type="OrthoDB" id="14749at2157"/>
<dbReference type="PhylomeDB" id="A9A8V2"/>
<dbReference type="GO" id="GO:0003677">
    <property type="term" value="F:DNA binding"/>
    <property type="evidence" value="ECO:0007669"/>
    <property type="project" value="UniProtKB-UniRule"/>
</dbReference>
<dbReference type="GO" id="GO:0030337">
    <property type="term" value="F:DNA polymerase processivity factor activity"/>
    <property type="evidence" value="ECO:0007669"/>
    <property type="project" value="UniProtKB-UniRule"/>
</dbReference>
<dbReference type="GO" id="GO:0006272">
    <property type="term" value="P:leading strand elongation"/>
    <property type="evidence" value="ECO:0007669"/>
    <property type="project" value="TreeGrafter"/>
</dbReference>
<dbReference type="GO" id="GO:0006275">
    <property type="term" value="P:regulation of DNA replication"/>
    <property type="evidence" value="ECO:0007669"/>
    <property type="project" value="UniProtKB-UniRule"/>
</dbReference>
<dbReference type="CDD" id="cd00577">
    <property type="entry name" value="PCNA"/>
    <property type="match status" value="1"/>
</dbReference>
<dbReference type="Gene3D" id="3.70.10.10">
    <property type="match status" value="1"/>
</dbReference>
<dbReference type="HAMAP" id="MF_00317">
    <property type="entry name" value="DNApol_clamp_arch"/>
    <property type="match status" value="1"/>
</dbReference>
<dbReference type="InterPro" id="IPR046938">
    <property type="entry name" value="DNA_clamp_sf"/>
</dbReference>
<dbReference type="InterPro" id="IPR000730">
    <property type="entry name" value="Pr_cel_nuc_antig"/>
</dbReference>
<dbReference type="InterPro" id="IPR022649">
    <property type="entry name" value="Pr_cel_nuc_antig_C"/>
</dbReference>
<dbReference type="InterPro" id="IPR022659">
    <property type="entry name" value="Pr_cel_nuc_antig_CS"/>
</dbReference>
<dbReference type="InterPro" id="IPR022648">
    <property type="entry name" value="Pr_cel_nuc_antig_N"/>
</dbReference>
<dbReference type="NCBIfam" id="TIGR00590">
    <property type="entry name" value="pcna"/>
    <property type="match status" value="1"/>
</dbReference>
<dbReference type="NCBIfam" id="NF002219">
    <property type="entry name" value="PRK01115.1-2"/>
    <property type="match status" value="1"/>
</dbReference>
<dbReference type="NCBIfam" id="NF002222">
    <property type="entry name" value="PRK01115.1-5"/>
    <property type="match status" value="1"/>
</dbReference>
<dbReference type="PANTHER" id="PTHR11352">
    <property type="entry name" value="PROLIFERATING CELL NUCLEAR ANTIGEN"/>
    <property type="match status" value="1"/>
</dbReference>
<dbReference type="PANTHER" id="PTHR11352:SF0">
    <property type="entry name" value="PROLIFERATING CELL NUCLEAR ANTIGEN"/>
    <property type="match status" value="1"/>
</dbReference>
<dbReference type="Pfam" id="PF02747">
    <property type="entry name" value="PCNA_C"/>
    <property type="match status" value="1"/>
</dbReference>
<dbReference type="Pfam" id="PF00705">
    <property type="entry name" value="PCNA_N"/>
    <property type="match status" value="1"/>
</dbReference>
<dbReference type="PRINTS" id="PR00339">
    <property type="entry name" value="PCNACYCLIN"/>
</dbReference>
<dbReference type="SUPFAM" id="SSF55979">
    <property type="entry name" value="DNA clamp"/>
    <property type="match status" value="2"/>
</dbReference>
<dbReference type="PROSITE" id="PS01251">
    <property type="entry name" value="PCNA_1"/>
    <property type="match status" value="1"/>
</dbReference>
<accession>A9A8V2</accession>
<proteinExistence type="inferred from homology"/>
<sequence length="250" mass="27865">MFRATCNTRDFKKVINATSNLVDEICFEVDENGIKASAMDPSHVALVSMEMPKEVFEEYEGDIHDIGIDLEALKKIIARGKGDEKLILDLDVEKNKLNVTFKSNVTRKFSIALYDVSSSNLKVPDIEYPNNVSIKAGAFVEALKDAELVNDHITLKVDEDKFIIYSKGDLNQSETVFDNGIEDDDATLAEFNMGEASRSTFNLAYLKDLTKSTAAEDLLKIYLGSDMPVKIEYEVSGSKLVFLLAPRIES</sequence>
<comment type="function">
    <text evidence="1">Sliding clamp subunit that acts as a moving platform for DNA processing. Responsible for tethering the catalytic subunit of DNA polymerase and other proteins to DNA during high-speed replication.</text>
</comment>
<comment type="subunit">
    <text evidence="1">Homotrimer. The subunits circularize to form a toroid; DNA passes through its center. Replication factor C (RFC) is required to load the toroid on the DNA.</text>
</comment>
<comment type="similarity">
    <text evidence="1">Belongs to the PCNA family.</text>
</comment>
<evidence type="ECO:0000255" key="1">
    <source>
        <dbReference type="HAMAP-Rule" id="MF_00317"/>
    </source>
</evidence>